<proteinExistence type="inferred from homology"/>
<evidence type="ECO:0000255" key="1">
    <source>
        <dbReference type="HAMAP-Rule" id="MF_01029"/>
    </source>
</evidence>
<accession>A4TQT0</accession>
<dbReference type="EMBL" id="CP000668">
    <property type="protein sequence ID" value="ABP41642.1"/>
    <property type="molecule type" value="Genomic_DNA"/>
</dbReference>
<dbReference type="RefSeq" id="WP_002209274.1">
    <property type="nucleotide sequence ID" value="NZ_CP009715.1"/>
</dbReference>
<dbReference type="SMR" id="A4TQT0"/>
<dbReference type="KEGG" id="ypp:YPDSF_3285"/>
<dbReference type="PATRIC" id="fig|386656.14.peg.1056"/>
<dbReference type="CDD" id="cd10456">
    <property type="entry name" value="GIY-YIG_UPF0213"/>
    <property type="match status" value="1"/>
</dbReference>
<dbReference type="Gene3D" id="3.40.1440.10">
    <property type="entry name" value="GIY-YIG endonuclease"/>
    <property type="match status" value="1"/>
</dbReference>
<dbReference type="HAMAP" id="MF_01029">
    <property type="entry name" value="UPF0213"/>
    <property type="match status" value="1"/>
</dbReference>
<dbReference type="InterPro" id="IPR000305">
    <property type="entry name" value="GIY-YIG_endonuc"/>
</dbReference>
<dbReference type="InterPro" id="IPR035901">
    <property type="entry name" value="GIY-YIG_endonuc_sf"/>
</dbReference>
<dbReference type="InterPro" id="IPR050190">
    <property type="entry name" value="UPF0213_domain"/>
</dbReference>
<dbReference type="InterPro" id="IPR022992">
    <property type="entry name" value="UPF0213_GIY-YIG_endonuc"/>
</dbReference>
<dbReference type="PANTHER" id="PTHR34477">
    <property type="entry name" value="UPF0213 PROTEIN YHBQ"/>
    <property type="match status" value="1"/>
</dbReference>
<dbReference type="PANTHER" id="PTHR34477:SF1">
    <property type="entry name" value="UPF0213 PROTEIN YHBQ"/>
    <property type="match status" value="1"/>
</dbReference>
<dbReference type="Pfam" id="PF01541">
    <property type="entry name" value="GIY-YIG"/>
    <property type="match status" value="1"/>
</dbReference>
<dbReference type="SUPFAM" id="SSF82771">
    <property type="entry name" value="GIY-YIG endonuclease"/>
    <property type="match status" value="1"/>
</dbReference>
<dbReference type="PROSITE" id="PS50164">
    <property type="entry name" value="GIY_YIG"/>
    <property type="match status" value="1"/>
</dbReference>
<reference key="1">
    <citation type="submission" date="2007-02" db="EMBL/GenBank/DDBJ databases">
        <title>Complete sequence of chromosome of Yersinia pestis Pestoides F.</title>
        <authorList>
            <consortium name="US DOE Joint Genome Institute"/>
            <person name="Copeland A."/>
            <person name="Lucas S."/>
            <person name="Lapidus A."/>
            <person name="Barry K."/>
            <person name="Detter J.C."/>
            <person name="Glavina del Rio T."/>
            <person name="Hammon N."/>
            <person name="Israni S."/>
            <person name="Dalin E."/>
            <person name="Tice H."/>
            <person name="Pitluck S."/>
            <person name="Di Bartolo G."/>
            <person name="Chain P."/>
            <person name="Malfatti S."/>
            <person name="Shin M."/>
            <person name="Vergez L."/>
            <person name="Schmutz J."/>
            <person name="Larimer F."/>
            <person name="Land M."/>
            <person name="Hauser L."/>
            <person name="Worsham P."/>
            <person name="Chu M."/>
            <person name="Bearden S."/>
            <person name="Garcia E."/>
            <person name="Richardson P."/>
        </authorList>
    </citation>
    <scope>NUCLEOTIDE SEQUENCE [LARGE SCALE GENOMIC DNA]</scope>
    <source>
        <strain>Pestoides F</strain>
    </source>
</reference>
<organism>
    <name type="scientific">Yersinia pestis (strain Pestoides F)</name>
    <dbReference type="NCBI Taxonomy" id="386656"/>
    <lineage>
        <taxon>Bacteria</taxon>
        <taxon>Pseudomonadati</taxon>
        <taxon>Pseudomonadota</taxon>
        <taxon>Gammaproteobacteria</taxon>
        <taxon>Enterobacterales</taxon>
        <taxon>Yersiniaceae</taxon>
        <taxon>Yersinia</taxon>
    </lineage>
</organism>
<feature type="chain" id="PRO_1000063705" description="UPF0213 protein YPDSF_3285">
    <location>
        <begin position="1"/>
        <end position="95"/>
    </location>
</feature>
<feature type="domain" description="GIY-YIG" evidence="1">
    <location>
        <begin position="4"/>
        <end position="79"/>
    </location>
</feature>
<comment type="similarity">
    <text evidence="1">Belongs to the UPF0213 family.</text>
</comment>
<protein>
    <recommendedName>
        <fullName evidence="1">UPF0213 protein YPDSF_3285</fullName>
    </recommendedName>
</protein>
<gene>
    <name type="ordered locus">YPDSF_3285</name>
</gene>
<sequence length="95" mass="10687">MSDSLWHLYLLRTASGMLYTGITTDVARRLAQHQAGKGAKALRGKGELTLVFHCEAGDRSTALKLEYRVKQLSKQQKEKLVIDQPRLLTTLFLDS</sequence>
<name>Y3285_YERPP</name>